<dbReference type="EMBL" id="AB029434">
    <property type="protein sequence ID" value="BAA89371.1"/>
    <property type="molecule type" value="mRNA"/>
</dbReference>
<dbReference type="EMBL" id="AJ252278">
    <property type="protein sequence ID" value="CAB65733.1"/>
    <property type="molecule type" value="mRNA"/>
</dbReference>
<dbReference type="EMBL" id="AF296558">
    <property type="protein sequence ID" value="AAG10300.1"/>
    <property type="molecule type" value="Genomic_DNA"/>
</dbReference>
<dbReference type="EMBL" id="EU072086">
    <property type="protein sequence ID" value="ABV55189.1"/>
    <property type="molecule type" value="mRNA"/>
</dbReference>
<dbReference type="EMBL" id="EF549569">
    <property type="protein sequence ID" value="ABQ40357.1"/>
    <property type="molecule type" value="mRNA"/>
</dbReference>
<dbReference type="EMBL" id="EF549571">
    <property type="protein sequence ID" value="ABQ40358.1"/>
    <property type="molecule type" value="mRNA"/>
</dbReference>
<dbReference type="EMBL" id="EF549572">
    <property type="protein sequence ID" value="ABQ40359.1"/>
    <property type="molecule type" value="mRNA"/>
</dbReference>
<dbReference type="EMBL" id="EF549573">
    <property type="protein sequence ID" value="ABQ40360.1"/>
    <property type="molecule type" value="mRNA"/>
</dbReference>
<dbReference type="EMBL" id="EF549574">
    <property type="protein sequence ID" value="ABQ40361.1"/>
    <property type="molecule type" value="mRNA"/>
</dbReference>
<dbReference type="EMBL" id="EF549575">
    <property type="protein sequence ID" value="ABQ40362.1"/>
    <property type="molecule type" value="mRNA"/>
</dbReference>
<dbReference type="EMBL" id="EU072083">
    <property type="protein sequence ID" value="ABV55186.1"/>
    <property type="molecule type" value="mRNA"/>
</dbReference>
<dbReference type="EMBL" id="EU072084">
    <property type="protein sequence ID" value="ABV55187.1"/>
    <property type="molecule type" value="mRNA"/>
</dbReference>
<dbReference type="EMBL" id="EU072085">
    <property type="protein sequence ID" value="ABV55188.1"/>
    <property type="molecule type" value="mRNA"/>
</dbReference>
<dbReference type="EMBL" id="EU072087">
    <property type="protein sequence ID" value="ABV55190.1"/>
    <property type="molecule type" value="mRNA"/>
</dbReference>
<dbReference type="EMBL" id="AY184207">
    <property type="protein sequence ID" value="AAO27351.1"/>
    <property type="molecule type" value="mRNA"/>
</dbReference>
<dbReference type="EMBL" id="AY359053">
    <property type="protein sequence ID" value="AAQ89412.1"/>
    <property type="molecule type" value="mRNA"/>
</dbReference>
<dbReference type="EMBL" id="AC022384">
    <property type="status" value="NOT_ANNOTATED_CDS"/>
    <property type="molecule type" value="Genomic_DNA"/>
</dbReference>
<dbReference type="EMBL" id="CH471055">
    <property type="protein sequence ID" value="EAW64074.1"/>
    <property type="molecule type" value="Genomic_DNA"/>
</dbReference>
<dbReference type="EMBL" id="CH471055">
    <property type="protein sequence ID" value="EAW64075.1"/>
    <property type="molecule type" value="Genomic_DNA"/>
</dbReference>
<dbReference type="EMBL" id="BC025791">
    <property type="protein sequence ID" value="AAH25791.1"/>
    <property type="molecule type" value="mRNA"/>
</dbReference>
<dbReference type="EMBL" id="AB035700">
    <property type="protein sequence ID" value="BAB19045.1"/>
    <property type="molecule type" value="mRNA"/>
</dbReference>
<dbReference type="CCDS" id="CCDS33700.1">
    <molecule id="Q9UBU3-1"/>
</dbReference>
<dbReference type="CCDS" id="CCDS46747.1">
    <molecule id="Q9UBU3-5"/>
</dbReference>
<dbReference type="CCDS" id="CCDS46748.1">
    <molecule id="Q9UBU3-3"/>
</dbReference>
<dbReference type="CCDS" id="CCDS46749.1">
    <molecule id="Q9UBU3-4"/>
</dbReference>
<dbReference type="CCDS" id="CCDS46750.1">
    <molecule id="Q9UBU3-2"/>
</dbReference>
<dbReference type="PIR" id="A59316">
    <property type="entry name" value="A59316"/>
</dbReference>
<dbReference type="RefSeq" id="NP_001128413.1">
    <molecule id="Q9UBU3-2"/>
    <property type="nucleotide sequence ID" value="NM_001134941.3"/>
</dbReference>
<dbReference type="RefSeq" id="NP_001128416.1">
    <molecule id="Q9UBU3-3"/>
    <property type="nucleotide sequence ID" value="NM_001134944.2"/>
</dbReference>
<dbReference type="RefSeq" id="NP_001128417.1">
    <molecule id="Q9UBU3-4"/>
    <property type="nucleotide sequence ID" value="NM_001134945.2"/>
</dbReference>
<dbReference type="RefSeq" id="NP_001128418.1">
    <molecule id="Q9UBU3-5"/>
    <property type="nucleotide sequence ID" value="NM_001134946.2"/>
</dbReference>
<dbReference type="RefSeq" id="NP_001289750.1">
    <molecule id="Q9UBU3-1"/>
    <property type="nucleotide sequence ID" value="NM_001302821.2"/>
</dbReference>
<dbReference type="RefSeq" id="NP_001289751.1">
    <molecule id="Q9UBU3-1"/>
    <property type="nucleotide sequence ID" value="NM_001302822.2"/>
</dbReference>
<dbReference type="RefSeq" id="NP_001289752.1">
    <molecule id="Q9UBU3-2"/>
    <property type="nucleotide sequence ID" value="NM_001302823.2"/>
</dbReference>
<dbReference type="RefSeq" id="NP_001289753.1">
    <molecule id="Q9UBU3-1"/>
    <property type="nucleotide sequence ID" value="NM_001302824.2"/>
</dbReference>
<dbReference type="RefSeq" id="NP_001289754.1">
    <molecule id="Q9UBU3-1"/>
    <property type="nucleotide sequence ID" value="NM_001302825.2"/>
</dbReference>
<dbReference type="RefSeq" id="NP_057446.1">
    <molecule id="Q9UBU3-1"/>
    <property type="nucleotide sequence ID" value="NM_016362.5"/>
</dbReference>
<dbReference type="RefSeq" id="XP_016862101.1">
    <property type="nucleotide sequence ID" value="XM_017006612.1"/>
</dbReference>
<dbReference type="RefSeq" id="XP_016862102.1">
    <property type="nucleotide sequence ID" value="XM_017006613.1"/>
</dbReference>
<dbReference type="PDB" id="6H3E">
    <property type="method" value="NMR"/>
    <property type="chains" value="A=24-41"/>
</dbReference>
<dbReference type="PDB" id="7F9Y">
    <property type="method" value="EM"/>
    <property type="resolution" value="2.90 A"/>
    <property type="chains" value="C=24-51"/>
</dbReference>
<dbReference type="PDB" id="7NA7">
    <property type="method" value="EM"/>
    <property type="resolution" value="2.70 A"/>
    <property type="chains" value="L=24-35"/>
</dbReference>
<dbReference type="PDB" id="7W2Z">
    <property type="method" value="EM"/>
    <property type="resolution" value="2.80 A"/>
    <property type="chains" value="L=24-39"/>
</dbReference>
<dbReference type="PDBsum" id="6H3E"/>
<dbReference type="PDBsum" id="7F9Y"/>
<dbReference type="PDBsum" id="7NA7"/>
<dbReference type="PDBsum" id="7W2Z"/>
<dbReference type="BMRB" id="Q9UBU3"/>
<dbReference type="EMDB" id="EMD-24267"/>
<dbReference type="EMDB" id="EMD-31500"/>
<dbReference type="EMDB" id="EMD-32268"/>
<dbReference type="SMR" id="Q9UBU3"/>
<dbReference type="BioGRID" id="119706">
    <property type="interactions" value="18"/>
</dbReference>
<dbReference type="FunCoup" id="Q9UBU3">
    <property type="interactions" value="596"/>
</dbReference>
<dbReference type="IntAct" id="Q9UBU3">
    <property type="interactions" value="13"/>
</dbReference>
<dbReference type="STRING" id="9606.ENSP00000335074"/>
<dbReference type="BindingDB" id="Q9UBU3"/>
<dbReference type="ChEMBL" id="CHEMBL1921664"/>
<dbReference type="GlyGen" id="Q9UBU3">
    <property type="glycosylation" value="1 site"/>
</dbReference>
<dbReference type="iPTMnet" id="Q9UBU3"/>
<dbReference type="PhosphoSitePlus" id="Q9UBU3"/>
<dbReference type="BioMuta" id="GHRL"/>
<dbReference type="DMDM" id="17865471"/>
<dbReference type="MassIVE" id="Q9UBU3"/>
<dbReference type="PaxDb" id="9606-ENSP00000335074"/>
<dbReference type="PeptideAtlas" id="Q9UBU3"/>
<dbReference type="ProteomicsDB" id="84065">
    <molecule id="Q9UBU3-1"/>
</dbReference>
<dbReference type="ProteomicsDB" id="84066">
    <molecule id="Q9UBU3-2"/>
</dbReference>
<dbReference type="ProteomicsDB" id="84067">
    <molecule id="Q9UBU3-3"/>
</dbReference>
<dbReference type="ProteomicsDB" id="84068">
    <molecule id="Q9UBU3-4"/>
</dbReference>
<dbReference type="ProteomicsDB" id="84069">
    <molecule id="Q9UBU3-5"/>
</dbReference>
<dbReference type="ABCD" id="Q9UBU3">
    <property type="antibodies" value="20 sequenced antibodies"/>
</dbReference>
<dbReference type="Antibodypedia" id="2526">
    <property type="antibodies" value="919 antibodies from 41 providers"/>
</dbReference>
<dbReference type="DNASU" id="51738"/>
<dbReference type="Ensembl" id="ENST00000287656.11">
    <molecule id="Q9UBU3-2"/>
    <property type="protein sequence ID" value="ENSP00000287656.7"/>
    <property type="gene ID" value="ENSG00000157017.16"/>
</dbReference>
<dbReference type="Ensembl" id="ENST00000335542.13">
    <molecule id="Q9UBU3-1"/>
    <property type="protein sequence ID" value="ENSP00000335074.8"/>
    <property type="gene ID" value="ENSG00000157017.16"/>
</dbReference>
<dbReference type="Ensembl" id="ENST00000422159.5">
    <molecule id="Q9UBU3-6"/>
    <property type="protein sequence ID" value="ENSP00000405464.1"/>
    <property type="gene ID" value="ENSG00000157017.16"/>
</dbReference>
<dbReference type="Ensembl" id="ENST00000429122.1">
    <molecule id="Q9UBU3-1"/>
    <property type="protein sequence ID" value="ENSP00000414819.1"/>
    <property type="gene ID" value="ENSG00000157017.16"/>
</dbReference>
<dbReference type="Ensembl" id="ENST00000430179.5">
    <molecule id="Q9UBU3-2"/>
    <property type="protein sequence ID" value="ENSP00000399922.1"/>
    <property type="gene ID" value="ENSG00000157017.16"/>
</dbReference>
<dbReference type="Ensembl" id="ENST00000437422.6">
    <molecule id="Q9UBU3-3"/>
    <property type="protein sequence ID" value="ENSP00000416768.2"/>
    <property type="gene ID" value="ENSG00000157017.16"/>
</dbReference>
<dbReference type="Ensembl" id="ENST00000439975.6">
    <molecule id="Q9UBU3-5"/>
    <property type="protein sequence ID" value="ENSP00000403725.2"/>
    <property type="gene ID" value="ENSG00000157017.16"/>
</dbReference>
<dbReference type="Ensembl" id="ENST00000449238.6">
    <molecule id="Q9UBU3-4"/>
    <property type="protein sequence ID" value="ENSP00000388145.2"/>
    <property type="gene ID" value="ENSG00000157017.16"/>
</dbReference>
<dbReference type="Ensembl" id="ENST00000457360.5">
    <molecule id="Q9UBU3-1"/>
    <property type="protein sequence ID" value="ENSP00000391406.1"/>
    <property type="gene ID" value="ENSG00000157017.16"/>
</dbReference>
<dbReference type="GeneID" id="51738"/>
<dbReference type="KEGG" id="hsa:51738"/>
<dbReference type="MANE-Select" id="ENST00000335542.13">
    <property type="protein sequence ID" value="ENSP00000335074.8"/>
    <property type="RefSeq nucleotide sequence ID" value="NM_016362.5"/>
    <property type="RefSeq protein sequence ID" value="NP_057446.1"/>
</dbReference>
<dbReference type="UCSC" id="uc003bvj.2">
    <molecule id="Q9UBU3-1"/>
    <property type="organism name" value="human"/>
</dbReference>
<dbReference type="AGR" id="HGNC:18129"/>
<dbReference type="CTD" id="51738"/>
<dbReference type="DisGeNET" id="51738"/>
<dbReference type="GeneCards" id="GHRL"/>
<dbReference type="HGNC" id="HGNC:18129">
    <property type="gene designation" value="GHRL"/>
</dbReference>
<dbReference type="HPA" id="ENSG00000157017">
    <property type="expression patterns" value="Tissue enriched (stomach)"/>
</dbReference>
<dbReference type="MalaCards" id="GHRL"/>
<dbReference type="MIM" id="605353">
    <property type="type" value="gene"/>
</dbReference>
<dbReference type="neXtProt" id="NX_Q9UBU3"/>
<dbReference type="OpenTargets" id="ENSG00000157017"/>
<dbReference type="PharmGKB" id="PA142671740"/>
<dbReference type="VEuPathDB" id="HostDB:ENSG00000157017"/>
<dbReference type="eggNOG" id="ENOG502SFY3">
    <property type="taxonomic scope" value="Eukaryota"/>
</dbReference>
<dbReference type="GeneTree" id="ENSGT00390000004064"/>
<dbReference type="HOGENOM" id="CLU_168380_0_0_1"/>
<dbReference type="InParanoid" id="Q9UBU3"/>
<dbReference type="OMA" id="QYQQYGR"/>
<dbReference type="OrthoDB" id="9896247at2759"/>
<dbReference type="PAN-GO" id="Q9UBU3">
    <property type="GO annotations" value="7 GO annotations based on evolutionary models"/>
</dbReference>
<dbReference type="PhylomeDB" id="Q9UBU3"/>
<dbReference type="TreeFam" id="TF336219"/>
<dbReference type="PathwayCommons" id="Q9UBU3"/>
<dbReference type="Reactome" id="R-HSA-375276">
    <molecule id="Q9UBU3-1"/>
    <property type="pathway name" value="Peptide ligand-binding receptors"/>
</dbReference>
<dbReference type="Reactome" id="R-HSA-416476">
    <molecule id="Q9UBU3-1"/>
    <property type="pathway name" value="G alpha (q) signalling events"/>
</dbReference>
<dbReference type="Reactome" id="R-HSA-422085">
    <property type="pathway name" value="Synthesis, secretion, and deacylation of Ghrelin"/>
</dbReference>
<dbReference type="SignaLink" id="Q9UBU3"/>
<dbReference type="SIGNOR" id="Q9UBU3"/>
<dbReference type="BioGRID-ORCS" id="51738">
    <property type="hits" value="15 hits in 1142 CRISPR screens"/>
</dbReference>
<dbReference type="GeneWiki" id="Ghrelin"/>
<dbReference type="GenomeRNAi" id="51738"/>
<dbReference type="Pharos" id="Q9UBU3">
    <property type="development level" value="Tbio"/>
</dbReference>
<dbReference type="PRO" id="PR:Q9UBU3"/>
<dbReference type="Proteomes" id="UP000005640">
    <property type="component" value="Chromosome 3"/>
</dbReference>
<dbReference type="RNAct" id="Q9UBU3">
    <property type="molecule type" value="protein"/>
</dbReference>
<dbReference type="Bgee" id="ENSG00000157017">
    <property type="expression patterns" value="Expressed in cardia of stomach and 125 other cell types or tissues"/>
</dbReference>
<dbReference type="ExpressionAtlas" id="Q9UBU3">
    <property type="expression patterns" value="baseline and differential"/>
</dbReference>
<dbReference type="GO" id="GO:0030424">
    <property type="term" value="C:axon"/>
    <property type="evidence" value="ECO:0000314"/>
    <property type="project" value="UniProtKB"/>
</dbReference>
<dbReference type="GO" id="GO:0005788">
    <property type="term" value="C:endoplasmic reticulum lumen"/>
    <property type="evidence" value="ECO:0000304"/>
    <property type="project" value="Reactome"/>
</dbReference>
<dbReference type="GO" id="GO:0005576">
    <property type="term" value="C:extracellular region"/>
    <property type="evidence" value="ECO:0000314"/>
    <property type="project" value="UniProtKB"/>
</dbReference>
<dbReference type="GO" id="GO:0005615">
    <property type="term" value="C:extracellular space"/>
    <property type="evidence" value="ECO:0000314"/>
    <property type="project" value="UniProtKB"/>
</dbReference>
<dbReference type="GO" id="GO:0098978">
    <property type="term" value="C:glutamatergic synapse"/>
    <property type="evidence" value="ECO:0007669"/>
    <property type="project" value="Ensembl"/>
</dbReference>
<dbReference type="GO" id="GO:0099013">
    <property type="term" value="C:neuronal dense core vesicle lumen"/>
    <property type="evidence" value="ECO:0007669"/>
    <property type="project" value="Ensembl"/>
</dbReference>
<dbReference type="GO" id="GO:0098794">
    <property type="term" value="C:postsynapse"/>
    <property type="evidence" value="ECO:0007669"/>
    <property type="project" value="GOC"/>
</dbReference>
<dbReference type="GO" id="GO:0098685">
    <property type="term" value="C:Schaffer collateral - CA1 synapse"/>
    <property type="evidence" value="ECO:0007669"/>
    <property type="project" value="Ensembl"/>
</dbReference>
<dbReference type="GO" id="GO:0034774">
    <property type="term" value="C:secretory granule lumen"/>
    <property type="evidence" value="ECO:0000304"/>
    <property type="project" value="Reactome"/>
</dbReference>
<dbReference type="GO" id="GO:0001664">
    <property type="term" value="F:G protein-coupled receptor binding"/>
    <property type="evidence" value="ECO:0000250"/>
    <property type="project" value="UniProtKB"/>
</dbReference>
<dbReference type="GO" id="GO:0031768">
    <property type="term" value="F:ghrelin receptor binding"/>
    <property type="evidence" value="ECO:0000250"/>
    <property type="project" value="UniProtKB"/>
</dbReference>
<dbReference type="GO" id="GO:0016608">
    <property type="term" value="F:growth hormone-releasing hormone activity"/>
    <property type="evidence" value="ECO:0000250"/>
    <property type="project" value="UniProtKB"/>
</dbReference>
<dbReference type="GO" id="GO:0030296">
    <property type="term" value="F:protein tyrosine kinase activator activity"/>
    <property type="evidence" value="ECO:0000315"/>
    <property type="project" value="UniProtKB"/>
</dbReference>
<dbReference type="GO" id="GO:0008154">
    <property type="term" value="P:actin polymerization or depolymerization"/>
    <property type="evidence" value="ECO:0000314"/>
    <property type="project" value="UniProtKB"/>
</dbReference>
<dbReference type="GO" id="GO:0008343">
    <property type="term" value="P:adult feeding behavior"/>
    <property type="evidence" value="ECO:0000250"/>
    <property type="project" value="HGNC-UCL"/>
</dbReference>
<dbReference type="GO" id="GO:0051216">
    <property type="term" value="P:cartilage development"/>
    <property type="evidence" value="ECO:0000303"/>
    <property type="project" value="UniProtKB"/>
</dbReference>
<dbReference type="GO" id="GO:0043400">
    <property type="term" value="P:cortisol secretion"/>
    <property type="evidence" value="ECO:0000303"/>
    <property type="project" value="UniProtKB"/>
</dbReference>
<dbReference type="GO" id="GO:0046697">
    <property type="term" value="P:decidualization"/>
    <property type="evidence" value="ECO:0000314"/>
    <property type="project" value="UniProtKB"/>
</dbReference>
<dbReference type="GO" id="GO:0016358">
    <property type="term" value="P:dendrite development"/>
    <property type="evidence" value="ECO:0000314"/>
    <property type="project" value="MGI"/>
</dbReference>
<dbReference type="GO" id="GO:0060079">
    <property type="term" value="P:excitatory postsynaptic potential"/>
    <property type="evidence" value="ECO:0007669"/>
    <property type="project" value="Ensembl"/>
</dbReference>
<dbReference type="GO" id="GO:0007186">
    <property type="term" value="P:G protein-coupled receptor signaling pathway"/>
    <property type="evidence" value="ECO:0000250"/>
    <property type="project" value="UniProtKB"/>
</dbReference>
<dbReference type="GO" id="GO:0001696">
    <property type="term" value="P:gastric acid secretion"/>
    <property type="evidence" value="ECO:0000318"/>
    <property type="project" value="GO_Central"/>
</dbReference>
<dbReference type="GO" id="GO:0006006">
    <property type="term" value="P:glucose metabolic process"/>
    <property type="evidence" value="ECO:0000303"/>
    <property type="project" value="UniProtKB"/>
</dbReference>
<dbReference type="GO" id="GO:0030252">
    <property type="term" value="P:growth hormone secretion"/>
    <property type="evidence" value="ECO:0000304"/>
    <property type="project" value="HGNC-UCL"/>
</dbReference>
<dbReference type="GO" id="GO:0009755">
    <property type="term" value="P:hormone-mediated signaling pathway"/>
    <property type="evidence" value="ECO:0000304"/>
    <property type="project" value="HGNC-UCL"/>
</dbReference>
<dbReference type="GO" id="GO:0016525">
    <property type="term" value="P:negative regulation of angiogenesis"/>
    <property type="evidence" value="ECO:0000303"/>
    <property type="project" value="UniProtKB"/>
</dbReference>
<dbReference type="GO" id="GO:0043066">
    <property type="term" value="P:negative regulation of apoptotic process"/>
    <property type="evidence" value="ECO:0000314"/>
    <property type="project" value="UniProtKB"/>
</dbReference>
<dbReference type="GO" id="GO:0042322">
    <property type="term" value="P:negative regulation of circadian sleep/wake cycle, REM sleep"/>
    <property type="evidence" value="ECO:0000314"/>
    <property type="project" value="BHF-UCL"/>
</dbReference>
<dbReference type="GO" id="GO:0001937">
    <property type="term" value="P:negative regulation of endothelial cell proliferation"/>
    <property type="evidence" value="ECO:0000314"/>
    <property type="project" value="UniProtKB"/>
</dbReference>
<dbReference type="GO" id="GO:0050728">
    <property type="term" value="P:negative regulation of inflammatory response"/>
    <property type="evidence" value="ECO:0000314"/>
    <property type="project" value="UniProtKB"/>
</dbReference>
<dbReference type="GO" id="GO:0046676">
    <property type="term" value="P:negative regulation of insulin secretion"/>
    <property type="evidence" value="ECO:0007669"/>
    <property type="project" value="Ensembl"/>
</dbReference>
<dbReference type="GO" id="GO:0032691">
    <property type="term" value="P:negative regulation of interleukin-1 beta production"/>
    <property type="evidence" value="ECO:0000314"/>
    <property type="project" value="UniProtKB"/>
</dbReference>
<dbReference type="GO" id="GO:0032715">
    <property type="term" value="P:negative regulation of interleukin-6 production"/>
    <property type="evidence" value="ECO:0000314"/>
    <property type="project" value="UniProtKB"/>
</dbReference>
<dbReference type="GO" id="GO:0040013">
    <property type="term" value="P:negative regulation of locomotion"/>
    <property type="evidence" value="ECO:0007669"/>
    <property type="project" value="Ensembl"/>
</dbReference>
<dbReference type="GO" id="GO:0032720">
    <property type="term" value="P:negative regulation of tumor necrosis factor production"/>
    <property type="evidence" value="ECO:0000314"/>
    <property type="project" value="UniProtKB"/>
</dbReference>
<dbReference type="GO" id="GO:1904179">
    <property type="term" value="P:positive regulation of adipose tissue development"/>
    <property type="evidence" value="ECO:0007669"/>
    <property type="project" value="Ensembl"/>
</dbReference>
<dbReference type="GO" id="GO:0032100">
    <property type="term" value="P:positive regulation of appetite"/>
    <property type="evidence" value="ECO:0000250"/>
    <property type="project" value="HGNC-UCL"/>
</dbReference>
<dbReference type="GO" id="GO:1903012">
    <property type="term" value="P:positive regulation of bone development"/>
    <property type="evidence" value="ECO:0007669"/>
    <property type="project" value="Ensembl"/>
</dbReference>
<dbReference type="GO" id="GO:0046010">
    <property type="term" value="P:positive regulation of circadian sleep/wake cycle, non-REM sleep"/>
    <property type="evidence" value="ECO:0000314"/>
    <property type="project" value="BHF-UCL"/>
</dbReference>
<dbReference type="GO" id="GO:0120162">
    <property type="term" value="P:positive regulation of cold-induced thermogenesis"/>
    <property type="evidence" value="ECO:0000250"/>
    <property type="project" value="YuBioLab"/>
</dbReference>
<dbReference type="GO" id="GO:0051461">
    <property type="term" value="P:positive regulation of corticotropin secretion"/>
    <property type="evidence" value="ECO:0000314"/>
    <property type="project" value="BHF-UCL"/>
</dbReference>
<dbReference type="GO" id="GO:0051464">
    <property type="term" value="P:positive regulation of cortisol secretion"/>
    <property type="evidence" value="ECO:0000314"/>
    <property type="project" value="BHF-UCL"/>
</dbReference>
<dbReference type="GO" id="GO:0007204">
    <property type="term" value="P:positive regulation of cytosolic calcium ion concentration"/>
    <property type="evidence" value="ECO:0000250"/>
    <property type="project" value="UniProtKB"/>
</dbReference>
<dbReference type="GO" id="GO:1904000">
    <property type="term" value="P:positive regulation of eating behavior"/>
    <property type="evidence" value="ECO:0007669"/>
    <property type="project" value="Ensembl"/>
</dbReference>
<dbReference type="GO" id="GO:1904346">
    <property type="term" value="P:positive regulation of gastric mucosal blood circulation"/>
    <property type="evidence" value="ECO:0007669"/>
    <property type="project" value="Ensembl"/>
</dbReference>
<dbReference type="GO" id="GO:0060399">
    <property type="term" value="P:positive regulation of growth hormone receptor signaling pathway"/>
    <property type="evidence" value="ECO:0000305"/>
    <property type="project" value="BHF-UCL"/>
</dbReference>
<dbReference type="GO" id="GO:0060124">
    <property type="term" value="P:positive regulation of growth hormone secretion"/>
    <property type="evidence" value="ECO:0000314"/>
    <property type="project" value="BHF-UCL"/>
</dbReference>
<dbReference type="GO" id="GO:0040010">
    <property type="term" value="P:positive regulation of growth rate"/>
    <property type="evidence" value="ECO:0007669"/>
    <property type="project" value="Ensembl"/>
</dbReference>
<dbReference type="GO" id="GO:0032024">
    <property type="term" value="P:positive regulation of insulin secretion"/>
    <property type="evidence" value="ECO:0000250"/>
    <property type="project" value="UniProtKB"/>
</dbReference>
<dbReference type="GO" id="GO:0035774">
    <property type="term" value="P:positive regulation of insulin secretion involved in cellular response to glucose stimulus"/>
    <property type="evidence" value="ECO:0007669"/>
    <property type="project" value="Ensembl"/>
</dbReference>
<dbReference type="GO" id="GO:0043410">
    <property type="term" value="P:positive regulation of MAPK cascade"/>
    <property type="evidence" value="ECO:0000315"/>
    <property type="project" value="UniProtKB"/>
</dbReference>
<dbReference type="GO" id="GO:0040018">
    <property type="term" value="P:positive regulation of multicellular organism growth"/>
    <property type="evidence" value="ECO:0000305"/>
    <property type="project" value="HGNC-UCL"/>
</dbReference>
<dbReference type="GO" id="GO:0120058">
    <property type="term" value="P:positive regulation of small intestinal transit"/>
    <property type="evidence" value="ECO:0007669"/>
    <property type="project" value="Ensembl"/>
</dbReference>
<dbReference type="GO" id="GO:1904349">
    <property type="term" value="P:positive regulation of small intestine smooth muscle contraction"/>
    <property type="evidence" value="ECO:0007669"/>
    <property type="project" value="Ensembl"/>
</dbReference>
<dbReference type="GO" id="GO:1903672">
    <property type="term" value="P:positive regulation of sprouting angiogenesis"/>
    <property type="evidence" value="ECO:0007669"/>
    <property type="project" value="Ensembl"/>
</dbReference>
<dbReference type="GO" id="GO:0051965">
    <property type="term" value="P:positive regulation of synapse assembly"/>
    <property type="evidence" value="ECO:0000314"/>
    <property type="project" value="MGI"/>
</dbReference>
<dbReference type="GO" id="GO:1905564">
    <property type="term" value="P:positive regulation of vascular endothelial cell proliferation"/>
    <property type="evidence" value="ECO:0007669"/>
    <property type="project" value="Ensembl"/>
</dbReference>
<dbReference type="GO" id="GO:0099170">
    <property type="term" value="P:postsynaptic modulation of chemical synaptic transmission"/>
    <property type="evidence" value="ECO:0007669"/>
    <property type="project" value="Ensembl"/>
</dbReference>
<dbReference type="GO" id="GO:0042127">
    <property type="term" value="P:regulation of cell population proliferation"/>
    <property type="evidence" value="ECO:0000314"/>
    <property type="project" value="UniProtKB"/>
</dbReference>
<dbReference type="GO" id="GO:1905333">
    <property type="term" value="P:regulation of gastric motility"/>
    <property type="evidence" value="ECO:0007669"/>
    <property type="project" value="Ensembl"/>
</dbReference>
<dbReference type="GO" id="GO:0099175">
    <property type="term" value="P:regulation of postsynapse organization"/>
    <property type="evidence" value="ECO:0007669"/>
    <property type="project" value="Ensembl"/>
</dbReference>
<dbReference type="GO" id="GO:0032095">
    <property type="term" value="P:regulation of response to food"/>
    <property type="evidence" value="ECO:0000318"/>
    <property type="project" value="GO_Central"/>
</dbReference>
<dbReference type="GO" id="GO:0051969">
    <property type="term" value="P:regulation of transmission of nerve impulse"/>
    <property type="evidence" value="ECO:0007669"/>
    <property type="project" value="Ensembl"/>
</dbReference>
<dbReference type="GO" id="GO:0051602">
    <property type="term" value="P:response to electrical stimulus"/>
    <property type="evidence" value="ECO:0007669"/>
    <property type="project" value="Ensembl"/>
</dbReference>
<dbReference type="GO" id="GO:0043627">
    <property type="term" value="P:response to estrogen"/>
    <property type="evidence" value="ECO:0000314"/>
    <property type="project" value="UniProtKB"/>
</dbReference>
<dbReference type="GO" id="GO:0009725">
    <property type="term" value="P:response to hormone"/>
    <property type="evidence" value="ECO:0000314"/>
    <property type="project" value="UniProtKB"/>
</dbReference>
<dbReference type="GO" id="GO:0007416">
    <property type="term" value="P:synapse assembly"/>
    <property type="evidence" value="ECO:0007669"/>
    <property type="project" value="Ensembl"/>
</dbReference>
<dbReference type="InterPro" id="IPR006737">
    <property type="entry name" value="Motilin_assoc"/>
</dbReference>
<dbReference type="InterPro" id="IPR006738">
    <property type="entry name" value="Motilin_ghrelin"/>
</dbReference>
<dbReference type="InterPro" id="IPR005441">
    <property type="entry name" value="Preproghrelin"/>
</dbReference>
<dbReference type="PANTHER" id="PTHR14122:SF1">
    <property type="entry name" value="APPETITE-REGULATING HORMONE"/>
    <property type="match status" value="1"/>
</dbReference>
<dbReference type="PANTHER" id="PTHR14122">
    <property type="entry name" value="GHRELIN PRECURSOR"/>
    <property type="match status" value="1"/>
</dbReference>
<dbReference type="Pfam" id="PF04643">
    <property type="entry name" value="Motilin_assoc"/>
    <property type="match status" value="1"/>
</dbReference>
<dbReference type="Pfam" id="PF04644">
    <property type="entry name" value="Motilin_ghrelin"/>
    <property type="match status" value="1"/>
</dbReference>
<dbReference type="PRINTS" id="PR01624">
    <property type="entry name" value="GHRELIN"/>
</dbReference>
<sequence length="117" mass="12911">MPSPGTVCSLLLLGMLWLDLAMAGSSFLSPEHQRVQQRKESKKPPAKLQPRALAGWLRPEDGGQAEGAEDELEVRFNAPFDVGIKLSGVQYQQHSQALGKFLQDILWEEAKEAPADK</sequence>
<feature type="signal peptide" evidence="5 7">
    <location>
        <begin position="1"/>
        <end position="23"/>
    </location>
</feature>
<feature type="peptide" id="PRO_0000019202" description="Ghrelin-28">
    <location>
        <begin position="24"/>
        <end position="51"/>
    </location>
</feature>
<feature type="peptide" id="PRO_0000019203" description="Ghrelin-27">
    <location>
        <begin position="24"/>
        <end position="50"/>
    </location>
</feature>
<feature type="propeptide" id="PRO_0000019204" description="Removed in mature form">
    <location>
        <begin position="52"/>
        <end position="75"/>
    </location>
</feature>
<feature type="peptide" id="PRO_0000045140" description="Obestatin" evidence="1">
    <location>
        <begin position="76"/>
        <end position="98"/>
    </location>
</feature>
<feature type="propeptide" id="PRO_0000045141" description="Removed in mature form" evidence="1">
    <location>
        <begin position="99"/>
        <end position="117"/>
    </location>
</feature>
<feature type="region of interest" description="Disordered" evidence="3">
    <location>
        <begin position="29"/>
        <end position="50"/>
    </location>
</feature>
<feature type="compositionally biased region" description="Basic and acidic residues" evidence="3">
    <location>
        <begin position="31"/>
        <end position="43"/>
    </location>
</feature>
<feature type="modified residue" description="Leucine amide" evidence="1">
    <location>
        <position position="98"/>
    </location>
</feature>
<feature type="lipid moiety-binding region" description="O-decanoyl serine; alternate" evidence="4 6">
    <location>
        <position position="26"/>
    </location>
</feature>
<feature type="lipid moiety-binding region" description="O-hexanoyl serine; alternate" evidence="2">
    <location>
        <position position="26"/>
    </location>
</feature>
<feature type="lipid moiety-binding region" description="O-octanoyl serine; alternate" evidence="4 6 9">
    <location>
        <position position="26"/>
    </location>
</feature>
<feature type="splice variant" id="VSP_041438" description="In isoform 5." evidence="11">
    <original>MPSPGTVCSLLLLGMLWLDLAMAGSSFLSPEHQRVQQRKESKKPPAKLQPRALAGWLRPEDGGQAEGAEDELEVR</original>
    <variation>MFTCWWSYLRSTLAAVPGEASRVQ</variation>
    <location>
        <begin position="1"/>
        <end position="75"/>
    </location>
</feature>
<feature type="splice variant" id="VSP_041437" description="In isoform 3 and isoform 4." evidence="11">
    <original>MPSPGTVCSLLLLGMLWLDLAMAGSSFLSPEHQRVQ</original>
    <variation>MFTCWWSYLRSTLAAVPGEASRVQ</variation>
    <location>
        <begin position="1"/>
        <end position="36"/>
    </location>
</feature>
<feature type="splice variant" id="VSP_003245" description="In isoform 2 and isoform 4." evidence="10 11">
    <location>
        <position position="37"/>
    </location>
</feature>
<feature type="splice variant" id="VSP_047642" description="In isoform 6." evidence="12">
    <original>FNAPFDVGIKLSGVQYQQHSQALGKFLQDILWEEAKEAPADK</original>
    <variation>RPQPTSDRPQALLTSL</variation>
    <location>
        <begin position="76"/>
        <end position="117"/>
    </location>
</feature>
<feature type="sequence variant" id="VAR_050095" description="In dbSNP:rs696217." evidence="8">
    <original>L</original>
    <variation>M</variation>
    <location>
        <position position="72"/>
    </location>
</feature>
<feature type="sequence variant" id="VAR_029135" description="In dbSNP:rs4684677.">
    <original>Q</original>
    <variation>L</variation>
    <location>
        <position position="90"/>
    </location>
</feature>
<feature type="helix" evidence="14">
    <location>
        <begin position="32"/>
        <end position="36"/>
    </location>
</feature>
<accession>Q9UBU3</accession>
<accession>A8CF34</accession>
<accession>A8CF38</accession>
<accession>A8CF42</accession>
<accession>A8DN29</accession>
<accession>A8DN30</accession>
<accession>Q86YP8</accession>
<accession>Q8TAT9</accession>
<accession>Q9H3R3</accession>
<organism>
    <name type="scientific">Homo sapiens</name>
    <name type="common">Human</name>
    <dbReference type="NCBI Taxonomy" id="9606"/>
    <lineage>
        <taxon>Eukaryota</taxon>
        <taxon>Metazoa</taxon>
        <taxon>Chordata</taxon>
        <taxon>Craniata</taxon>
        <taxon>Vertebrata</taxon>
        <taxon>Euteleostomi</taxon>
        <taxon>Mammalia</taxon>
        <taxon>Eutheria</taxon>
        <taxon>Euarchontoglires</taxon>
        <taxon>Primates</taxon>
        <taxon>Haplorrhini</taxon>
        <taxon>Catarrhini</taxon>
        <taxon>Hominidae</taxon>
        <taxon>Homo</taxon>
    </lineage>
</organism>
<proteinExistence type="evidence at protein level"/>
<comment type="function">
    <molecule>Ghrelin-27</molecule>
    <text evidence="4">Ghrelin is the ligand for growth hormone secretagogue receptor type 1 (GHSR) (PubMed:10604470). Induces the release of growth hormone from the pituitary (PubMed:10604470). Has an appetite-stimulating effect, induces adiposity and stimulates gastric acid secretion. Involved in growth regulation.</text>
</comment>
<comment type="function">
    <molecule>Ghrelin-28</molecule>
    <text evidence="4">Ghrelin is the ligand for growth hormone secretagogue receptor type 1 (GHSR) (PubMed:10604470). Induces the release of growth hormone from the pituitary (PubMed:10604470). Has an appetite-stimulating effect, induces adiposity and stimulates gastric acid secretion. Involved in growth regulation.</text>
</comment>
<comment type="function">
    <molecule>Obestatin</molecule>
    <text evidence="1">May be the ligand for GPR39. May have an appetite-reducing effect resulting in decreased food intake. May reduce gastric emptying activity and jejunal motility (By similarity).</text>
</comment>
<comment type="interaction">
    <interactant intactId="EBI-10319458">
        <id>Q9UBU3</id>
    </interactant>
    <interactant intactId="EBI-741480">
        <id>Q9UMX0</id>
        <label>UBQLN1</label>
    </interactant>
    <organismsDiffer>false</organismsDiffer>
    <experiments>3</experiments>
</comment>
<comment type="interaction">
    <interactant intactId="EBI-10319458">
        <id>Q9UBU3</id>
    </interactant>
    <interactant intactId="EBI-10173939">
        <id>Q9UMX0-2</id>
        <label>UBQLN1</label>
    </interactant>
    <organismsDiffer>false</organismsDiffer>
    <experiments>3</experiments>
</comment>
<comment type="interaction">
    <interactant intactId="EBI-10319458">
        <id>Q9UBU3</id>
    </interactant>
    <interactant intactId="EBI-947187">
        <id>Q9UHD9</id>
        <label>UBQLN2</label>
    </interactant>
    <organismsDiffer>false</organismsDiffer>
    <experiments>3</experiments>
</comment>
<comment type="subcellular location">
    <subcellularLocation>
        <location>Secreted</location>
    </subcellularLocation>
</comment>
<comment type="alternative products">
    <event type="alternative splicing"/>
    <isoform>
        <id>Q9UBU3-1</id>
        <name>1</name>
        <name>Ghrelin</name>
        <sequence type="displayed"/>
    </isoform>
    <isoform>
        <id>Q9UBU3-2</id>
        <name>2</name>
        <name>des-Gln14-ghrelin</name>
        <sequence type="described" ref="VSP_003245"/>
    </isoform>
    <isoform>
        <id>Q9UBU3-3</id>
        <name>3</name>
        <sequence type="described" ref="VSP_041437"/>
    </isoform>
    <isoform>
        <id>Q9UBU3-4</id>
        <name>4</name>
        <sequence type="described" ref="VSP_041437 VSP_003245"/>
    </isoform>
    <isoform>
        <id>Q9UBU3-5</id>
        <name>5</name>
        <sequence type="described" ref="VSP_041438"/>
    </isoform>
    <isoform>
        <id>Q9UBU3-6</id>
        <name>6</name>
        <sequence type="described" ref="VSP_047642"/>
    </isoform>
</comment>
<comment type="tissue specificity">
    <text evidence="6">Highest level in stomach. All forms are found in serum as well. Other tissues compensate for the loss of ghrelin synthesis in the stomach following gastrectomy.</text>
</comment>
<comment type="PTM">
    <text evidence="4 9">O-octanoylated by GOAT/MBOAT4 (PubMed:18443287). O-octanoylation or O-decanoylation is essential for ghrelin activity (PubMed:10604470). The O-decanoylated forms Ghrelin-27-C10 and Ghrelin-28-C10 differ in the length of the carbon backbone of the carboxylic acid bound to Ser-26 (PubMed:10604470). A small fraction of ghrelin, ghrelin-28-C10:1, may be modified with a singly unsaturated carboxylic acid (PubMed:10604470). Also O-acetylated and O-butyrylated on Ser-26 to minor levels (PubMed:18443287).</text>
</comment>
<comment type="PTM">
    <text evidence="1">Amidation of Leu-98 is essential for obestatin activity.</text>
</comment>
<comment type="mass spectrometry" mass="3398.9" error="0.3" method="Electrospray" evidence="6">
    <molecule>Ghrelin-28</molecule>
    <text>Ghrelin-28-C10, O-decanoylated form.</text>
</comment>
<comment type="mass spectrometry" mass="3397.2" error="0.5" method="Electrospray" evidence="6">
    <molecule>Ghrelin-28</molecule>
    <text>Ghrelin-28-C10:1, O-decenoylated form.</text>
</comment>
<comment type="mass spectrometry" mass="3371.3" error="0.1" method="Electrospray" evidence="6">
    <molecule>Ghrelin-28</molecule>
    <text>Ghrelin-28-C8, O-octanoylated form.</text>
</comment>
<comment type="mass spectrometry" mass="3243.6" error="0.4" method="Electrospray" evidence="6">
    <molecule>Ghrelin-27</molecule>
    <text>Ghrelin-27-C10, O-decanoylated form.</text>
</comment>
<comment type="mass spectrometry" mass="3214.6" error="0.6" method="Electrospray" evidence="6">
    <molecule>Ghrelin-27</molecule>
    <text>Ghrelin-27-C8, O-octanoylated form.</text>
</comment>
<comment type="mass spectrometry" mass="3214.0" method="MALDI" evidence="9">
    <molecule>Ghrelin-27</molecule>
    <text>Ghrelin-27-C8, O-octanoylated form.</text>
</comment>
<comment type="mass spectrometry" mass="3370.0" method="MALDI" evidence="9">
    <molecule>Ghrelin-28</molecule>
    <text>Ghrelin-28-C8, O-octanoylated form.</text>
</comment>
<comment type="similarity">
    <text evidence="13">Belongs to the motilin family.</text>
</comment>
<comment type="online information" name="Atlas of Genetics and Cytogenetics in Oncology and Haematology">
    <link uri="https://atlasgeneticsoncology.org/gene/327/Ghrelin"/>
</comment>
<comment type="online information" name="Protein Spotlight">
    <link uri="https://www.proteinspotlight.org/back_issues/066"/>
    <text>Gut feelings - Issue 66 of January 2006</text>
</comment>
<comment type="online information" name="Wikipedia">
    <link uri="https://en.wikipedia.org/wiki/Ghrelin"/>
    <text>Ghrelin entry</text>
</comment>
<name>GHRL_HUMAN</name>
<keyword id="KW-0002">3D-structure</keyword>
<keyword id="KW-0025">Alternative splicing</keyword>
<keyword id="KW-0027">Amidation</keyword>
<keyword id="KW-0903">Direct protein sequencing</keyword>
<keyword id="KW-0372">Hormone</keyword>
<keyword id="KW-0449">Lipoprotein</keyword>
<keyword id="KW-1267">Proteomics identification</keyword>
<keyword id="KW-1185">Reference proteome</keyword>
<keyword id="KW-0964">Secreted</keyword>
<keyword id="KW-0732">Signal</keyword>
<reference key="1">
    <citation type="journal article" date="1999" name="Nature">
        <title>Ghrelin is a growth-hormone-releasing acylated peptide from stomach.</title>
        <authorList>
            <person name="Kojima M."/>
            <person name="Hosoda H."/>
            <person name="Date Y."/>
            <person name="Nakazato M."/>
            <person name="Matsuo H."/>
            <person name="Kangawa K."/>
        </authorList>
    </citation>
    <scope>NUCLEOTIDE SEQUENCE [MRNA] (ISOFORM 1)</scope>
    <scope>ACYLATION AT SER-26</scope>
    <source>
        <tissue>Stomach</tissue>
    </source>
</reference>
<reference key="2">
    <citation type="journal article" date="2000" name="Gastroenterology">
        <title>Identification and characterization of a novel gastric peptide hormone: the motilin-related peptide.</title>
        <authorList>
            <person name="Tomasetto C."/>
            <person name="Karam S.M."/>
            <person name="Ribieras S."/>
            <person name="Masson R."/>
            <person name="Lefebvre O."/>
            <person name="Staub A."/>
            <person name="Alexander G."/>
            <person name="Chenard M.-P."/>
            <person name="Rio M.-C."/>
        </authorList>
    </citation>
    <scope>NUCLEOTIDE SEQUENCE [MRNA] (ISOFORM 1)</scope>
    <scope>PROTEIN SEQUENCE OF 24-33</scope>
    <source>
        <tissue>Stomach</tissue>
    </source>
</reference>
<reference key="3">
    <citation type="journal article" date="2000" name="J. Endocr. Genet.">
        <title>Genomic organization of the human Ghrelin gene.</title>
        <authorList>
            <person name="Wajnrajch M.P."/>
            <person name="Ten I.S."/>
            <person name="Gertner J.M."/>
            <person name="Leibel R.L."/>
        </authorList>
    </citation>
    <scope>NUCLEOTIDE SEQUENCE [GENOMIC DNA]</scope>
</reference>
<reference key="4">
    <citation type="journal article" date="2003" name="J. Biol. Chem.">
        <title>Structural divergence of human ghrelin. Identification of multiple ghrelin-derived molecules produced by post-translational processing.</title>
        <authorList>
            <person name="Hosoda H."/>
            <person name="Kojima M."/>
            <person name="Mizushima T."/>
            <person name="Shimizu S."/>
            <person name="Kangawa K."/>
        </authorList>
    </citation>
    <scope>NUCLEOTIDE SEQUENCE [MRNA] (ISOFORM 2)</scope>
    <scope>TISSUE SPECIFICITY</scope>
    <scope>ACYLATION AT SER-26</scope>
    <scope>MASS SPECTROMETRY</scope>
    <source>
        <tissue>Stomach</tissue>
    </source>
</reference>
<reference key="5">
    <citation type="journal article" date="2007" name="BMC Genomics">
        <title>Revised genomic structure of the human ghrelin gene and identification of novel exons, alternative splice variants and natural antisense transcripts.</title>
        <authorList>
            <person name="Seim I."/>
            <person name="Collet C."/>
            <person name="Herington A.C."/>
            <person name="Chopin L.K."/>
        </authorList>
    </citation>
    <scope>NUCLEOTIDE SEQUENCE [MRNA] (ISOFORMS 1; 2; 3; 4 AND 5)</scope>
    <source>
        <tissue>Heart</tissue>
        <tissue>Kidney</tissue>
        <tissue>Placenta</tissue>
        <tissue>Stomach</tissue>
    </source>
</reference>
<reference key="6">
    <citation type="submission" date="2002-11" db="EMBL/GenBank/DDBJ databases">
        <title>Identification and expression pattern of an exon 3-deleted proghrelin variant in the prostate.</title>
        <authorList>
            <person name="Jeffery P.L."/>
            <person name="Herington A.C."/>
            <person name="Chopin L.K."/>
        </authorList>
    </citation>
    <scope>NUCLEOTIDE SEQUENCE [MRNA] (ISOFORM 6)</scope>
</reference>
<reference key="7">
    <citation type="journal article" date="2003" name="Genome Res.">
        <title>The secreted protein discovery initiative (SPDI), a large-scale effort to identify novel human secreted and transmembrane proteins: a bioinformatics assessment.</title>
        <authorList>
            <person name="Clark H.F."/>
            <person name="Gurney A.L."/>
            <person name="Abaya E."/>
            <person name="Baker K."/>
            <person name="Baldwin D.T."/>
            <person name="Brush J."/>
            <person name="Chen J."/>
            <person name="Chow B."/>
            <person name="Chui C."/>
            <person name="Crowley C."/>
            <person name="Currell B."/>
            <person name="Deuel B."/>
            <person name="Dowd P."/>
            <person name="Eaton D."/>
            <person name="Foster J.S."/>
            <person name="Grimaldi C."/>
            <person name="Gu Q."/>
            <person name="Hass P.E."/>
            <person name="Heldens S."/>
            <person name="Huang A."/>
            <person name="Kim H.S."/>
            <person name="Klimowski L."/>
            <person name="Jin Y."/>
            <person name="Johnson S."/>
            <person name="Lee J."/>
            <person name="Lewis L."/>
            <person name="Liao D."/>
            <person name="Mark M.R."/>
            <person name="Robbie E."/>
            <person name="Sanchez C."/>
            <person name="Schoenfeld J."/>
            <person name="Seshagiri S."/>
            <person name="Simmons L."/>
            <person name="Singh J."/>
            <person name="Smith V."/>
            <person name="Stinson J."/>
            <person name="Vagts A."/>
            <person name="Vandlen R.L."/>
            <person name="Watanabe C."/>
            <person name="Wieand D."/>
            <person name="Woods K."/>
            <person name="Xie M.-H."/>
            <person name="Yansura D.G."/>
            <person name="Yi S."/>
            <person name="Yu G."/>
            <person name="Yuan J."/>
            <person name="Zhang M."/>
            <person name="Zhang Z."/>
            <person name="Goddard A.D."/>
            <person name="Wood W.I."/>
            <person name="Godowski P.J."/>
            <person name="Gray A.M."/>
        </authorList>
    </citation>
    <scope>NUCLEOTIDE SEQUENCE [LARGE SCALE MRNA] (ISOFORM 1)</scope>
</reference>
<reference key="8">
    <citation type="journal article" date="2006" name="Nature">
        <title>The DNA sequence, annotation and analysis of human chromosome 3.</title>
        <authorList>
            <person name="Muzny D.M."/>
            <person name="Scherer S.E."/>
            <person name="Kaul R."/>
            <person name="Wang J."/>
            <person name="Yu J."/>
            <person name="Sudbrak R."/>
            <person name="Buhay C.J."/>
            <person name="Chen R."/>
            <person name="Cree A."/>
            <person name="Ding Y."/>
            <person name="Dugan-Rocha S."/>
            <person name="Gill R."/>
            <person name="Gunaratne P."/>
            <person name="Harris R.A."/>
            <person name="Hawes A.C."/>
            <person name="Hernandez J."/>
            <person name="Hodgson A.V."/>
            <person name="Hume J."/>
            <person name="Jackson A."/>
            <person name="Khan Z.M."/>
            <person name="Kovar-Smith C."/>
            <person name="Lewis L.R."/>
            <person name="Lozado R.J."/>
            <person name="Metzker M.L."/>
            <person name="Milosavljevic A."/>
            <person name="Miner G.R."/>
            <person name="Morgan M.B."/>
            <person name="Nazareth L.V."/>
            <person name="Scott G."/>
            <person name="Sodergren E."/>
            <person name="Song X.-Z."/>
            <person name="Steffen D."/>
            <person name="Wei S."/>
            <person name="Wheeler D.A."/>
            <person name="Wright M.W."/>
            <person name="Worley K.C."/>
            <person name="Yuan Y."/>
            <person name="Zhang Z."/>
            <person name="Adams C.Q."/>
            <person name="Ansari-Lari M.A."/>
            <person name="Ayele M."/>
            <person name="Brown M.J."/>
            <person name="Chen G."/>
            <person name="Chen Z."/>
            <person name="Clendenning J."/>
            <person name="Clerc-Blankenburg K.P."/>
            <person name="Chen R."/>
            <person name="Chen Z."/>
            <person name="Davis C."/>
            <person name="Delgado O."/>
            <person name="Dinh H.H."/>
            <person name="Dong W."/>
            <person name="Draper H."/>
            <person name="Ernst S."/>
            <person name="Fu G."/>
            <person name="Gonzalez-Garay M.L."/>
            <person name="Garcia D.K."/>
            <person name="Gillett W."/>
            <person name="Gu J."/>
            <person name="Hao B."/>
            <person name="Haugen E."/>
            <person name="Havlak P."/>
            <person name="He X."/>
            <person name="Hennig S."/>
            <person name="Hu S."/>
            <person name="Huang W."/>
            <person name="Jackson L.R."/>
            <person name="Jacob L.S."/>
            <person name="Kelly S.H."/>
            <person name="Kube M."/>
            <person name="Levy R."/>
            <person name="Li Z."/>
            <person name="Liu B."/>
            <person name="Liu J."/>
            <person name="Liu W."/>
            <person name="Lu J."/>
            <person name="Maheshwari M."/>
            <person name="Nguyen B.-V."/>
            <person name="Okwuonu G.O."/>
            <person name="Palmeiri A."/>
            <person name="Pasternak S."/>
            <person name="Perez L.M."/>
            <person name="Phelps K.A."/>
            <person name="Plopper F.J."/>
            <person name="Qiang B."/>
            <person name="Raymond C."/>
            <person name="Rodriguez R."/>
            <person name="Saenphimmachak C."/>
            <person name="Santibanez J."/>
            <person name="Shen H."/>
            <person name="Shen Y."/>
            <person name="Subramanian S."/>
            <person name="Tabor P.E."/>
            <person name="Verduzco D."/>
            <person name="Waldron L."/>
            <person name="Wang J."/>
            <person name="Wang J."/>
            <person name="Wang Q."/>
            <person name="Williams G.A."/>
            <person name="Wong G.K.-S."/>
            <person name="Yao Z."/>
            <person name="Zhang J."/>
            <person name="Zhang X."/>
            <person name="Zhao G."/>
            <person name="Zhou J."/>
            <person name="Zhou Y."/>
            <person name="Nelson D."/>
            <person name="Lehrach H."/>
            <person name="Reinhardt R."/>
            <person name="Naylor S.L."/>
            <person name="Yang H."/>
            <person name="Olson M."/>
            <person name="Weinstock G."/>
            <person name="Gibbs R.A."/>
        </authorList>
    </citation>
    <scope>NUCLEOTIDE SEQUENCE [LARGE SCALE GENOMIC DNA]</scope>
</reference>
<reference key="9">
    <citation type="submission" date="2005-07" db="EMBL/GenBank/DDBJ databases">
        <authorList>
            <person name="Mural R.J."/>
            <person name="Istrail S."/>
            <person name="Sutton G.G."/>
            <person name="Florea L."/>
            <person name="Halpern A.L."/>
            <person name="Mobarry C.M."/>
            <person name="Lippert R."/>
            <person name="Walenz B."/>
            <person name="Shatkay H."/>
            <person name="Dew I."/>
            <person name="Miller J.R."/>
            <person name="Flanigan M.J."/>
            <person name="Edwards N.J."/>
            <person name="Bolanos R."/>
            <person name="Fasulo D."/>
            <person name="Halldorsson B.V."/>
            <person name="Hannenhalli S."/>
            <person name="Turner R."/>
            <person name="Yooseph S."/>
            <person name="Lu F."/>
            <person name="Nusskern D.R."/>
            <person name="Shue B.C."/>
            <person name="Zheng X.H."/>
            <person name="Zhong F."/>
            <person name="Delcher A.L."/>
            <person name="Huson D.H."/>
            <person name="Kravitz S.A."/>
            <person name="Mouchard L."/>
            <person name="Reinert K."/>
            <person name="Remington K.A."/>
            <person name="Clark A.G."/>
            <person name="Waterman M.S."/>
            <person name="Eichler E.E."/>
            <person name="Adams M.D."/>
            <person name="Hunkapiller M.W."/>
            <person name="Myers E.W."/>
            <person name="Venter J.C."/>
        </authorList>
    </citation>
    <scope>NUCLEOTIDE SEQUENCE [LARGE SCALE GENOMIC DNA]</scope>
</reference>
<reference key="10">
    <citation type="journal article" date="2004" name="Genome Res.">
        <title>The status, quality, and expansion of the NIH full-length cDNA project: the Mammalian Gene Collection (MGC).</title>
        <authorList>
            <consortium name="The MGC Project Team"/>
        </authorList>
    </citation>
    <scope>NUCLEOTIDE SEQUENCE [LARGE SCALE MRNA] (ISOFORM 1)</scope>
    <scope>VARIANT MET-72</scope>
    <source>
        <tissue>Blood</tissue>
    </source>
</reference>
<reference key="11">
    <citation type="journal article" date="2004" name="Protein Sci.">
        <title>Signal peptide prediction based on analysis of experimentally verified cleavage sites.</title>
        <authorList>
            <person name="Zhang Z."/>
            <person name="Henzel W.J."/>
        </authorList>
    </citation>
    <scope>PROTEIN SEQUENCE OF 24-38</scope>
</reference>
<reference key="12">
    <citation type="journal article" date="2008" name="Proc. Natl. Acad. Sci. U.S.A.">
        <title>Ghrelin octanoylation mediated by an orphan lipid transferase.</title>
        <authorList>
            <person name="Gutierrez J.A."/>
            <person name="Solenberg P.J."/>
            <person name="Perkins D.R."/>
            <person name="Willency J.A."/>
            <person name="Knierman M.D."/>
            <person name="Jin Z."/>
            <person name="Witcher D.R."/>
            <person name="Luo S."/>
            <person name="Onyia J.E."/>
            <person name="Hale J.E."/>
        </authorList>
    </citation>
    <scope>MASS SPECTROMETRY</scope>
    <scope>ACYLATION AT SER-26</scope>
    <source>
        <tissue>Thyroid carcinoma</tissue>
    </source>
</reference>
<reference key="13">
    <citation type="journal article" date="2001" name="Trends Endocrinol. Metab.">
        <title>Ghrelin: discovery of the natural endogenous ligand for the growth hormone secretagogue receptor.</title>
        <authorList>
            <person name="Kojima M."/>
            <person name="Hosoda H."/>
            <person name="Matsuo H."/>
            <person name="Kangawa K."/>
        </authorList>
    </citation>
    <scope>REVIEW</scope>
</reference>
<evidence type="ECO:0000250" key="1"/>
<evidence type="ECO:0000250" key="2">
    <source>
        <dbReference type="UniProtKB" id="Q9EQX0"/>
    </source>
</evidence>
<evidence type="ECO:0000256" key="3">
    <source>
        <dbReference type="SAM" id="MobiDB-lite"/>
    </source>
</evidence>
<evidence type="ECO:0000269" key="4">
    <source>
    </source>
</evidence>
<evidence type="ECO:0000269" key="5">
    <source>
    </source>
</evidence>
<evidence type="ECO:0000269" key="6">
    <source>
    </source>
</evidence>
<evidence type="ECO:0000269" key="7">
    <source>
    </source>
</evidence>
<evidence type="ECO:0000269" key="8">
    <source>
    </source>
</evidence>
<evidence type="ECO:0000269" key="9">
    <source>
    </source>
</evidence>
<evidence type="ECO:0000303" key="10">
    <source>
    </source>
</evidence>
<evidence type="ECO:0000303" key="11">
    <source>
    </source>
</evidence>
<evidence type="ECO:0000303" key="12">
    <source ref="6"/>
</evidence>
<evidence type="ECO:0000305" key="13"/>
<evidence type="ECO:0007829" key="14">
    <source>
        <dbReference type="PDB" id="7W2Z"/>
    </source>
</evidence>
<gene>
    <name type="primary">GHRL</name>
    <name type="synonym">MTLRP</name>
    <name type="ORF">UNQ524/PRO1066</name>
</gene>
<protein>
    <recommendedName>
        <fullName>Appetite-regulating hormone</fullName>
    </recommendedName>
    <alternativeName>
        <fullName>Growth hormone secretagogue</fullName>
    </alternativeName>
    <alternativeName>
        <fullName>Growth hormone-releasing peptide</fullName>
    </alternativeName>
    <alternativeName>
        <fullName>Motilin-related peptide</fullName>
    </alternativeName>
    <alternativeName>
        <fullName>Protein M46</fullName>
    </alternativeName>
    <component>
        <recommendedName>
            <fullName>Ghrelin-27</fullName>
        </recommendedName>
    </component>
    <component>
        <recommendedName>
            <fullName>Ghrelin-28</fullName>
            <shortName>Ghrelin</shortName>
        </recommendedName>
    </component>
    <component>
        <recommendedName>
            <fullName>Obestatin</fullName>
        </recommendedName>
    </component>
</protein>